<keyword id="KW-0479">Metal-binding</keyword>
<keyword id="KW-0665">Pyrimidine biosynthesis</keyword>
<keyword id="KW-1185">Reference proteome</keyword>
<keyword id="KW-0862">Zinc</keyword>
<reference key="1">
    <citation type="submission" date="2006-10" db="EMBL/GenBank/DDBJ databases">
        <title>Complete sequence of Methanosaeta thermophila PT.</title>
        <authorList>
            <consortium name="US DOE Joint Genome Institute"/>
            <person name="Copeland A."/>
            <person name="Lucas S."/>
            <person name="Lapidus A."/>
            <person name="Barry K."/>
            <person name="Detter J.C."/>
            <person name="Glavina del Rio T."/>
            <person name="Hammon N."/>
            <person name="Israni S."/>
            <person name="Pitluck S."/>
            <person name="Chain P."/>
            <person name="Malfatti S."/>
            <person name="Shin M."/>
            <person name="Vergez L."/>
            <person name="Schmutz J."/>
            <person name="Larimer F."/>
            <person name="Land M."/>
            <person name="Hauser L."/>
            <person name="Kyrpides N."/>
            <person name="Kim E."/>
            <person name="Smith K.S."/>
            <person name="Ingram-Smith C."/>
            <person name="Richardson P."/>
        </authorList>
    </citation>
    <scope>NUCLEOTIDE SEQUENCE [LARGE SCALE GENOMIC DNA]</scope>
    <source>
        <strain>DSM 6194 / JCM 14653 / NBRC 101360 / PT</strain>
    </source>
</reference>
<name>PYRI_METTP</name>
<organism>
    <name type="scientific">Methanothrix thermoacetophila (strain DSM 6194 / JCM 14653 / NBRC 101360 / PT)</name>
    <name type="common">Methanosaeta thermophila</name>
    <dbReference type="NCBI Taxonomy" id="349307"/>
    <lineage>
        <taxon>Archaea</taxon>
        <taxon>Methanobacteriati</taxon>
        <taxon>Methanobacteriota</taxon>
        <taxon>Stenosarchaea group</taxon>
        <taxon>Methanomicrobia</taxon>
        <taxon>Methanotrichales</taxon>
        <taxon>Methanotrichaceae</taxon>
        <taxon>Methanothrix</taxon>
    </lineage>
</organism>
<comment type="function">
    <text evidence="1">Involved in allosteric regulation of aspartate carbamoyltransferase.</text>
</comment>
<comment type="cofactor">
    <cofactor evidence="1">
        <name>Zn(2+)</name>
        <dbReference type="ChEBI" id="CHEBI:29105"/>
    </cofactor>
    <text evidence="1">Binds 1 zinc ion per subunit.</text>
</comment>
<comment type="subunit">
    <text evidence="1">Contains catalytic and regulatory chains.</text>
</comment>
<comment type="similarity">
    <text evidence="1">Belongs to the PyrI family.</text>
</comment>
<evidence type="ECO:0000255" key="1">
    <source>
        <dbReference type="HAMAP-Rule" id="MF_00002"/>
    </source>
</evidence>
<feature type="chain" id="PRO_1000000041" description="Aspartate carbamoyltransferase regulatory chain">
    <location>
        <begin position="1"/>
        <end position="154"/>
    </location>
</feature>
<feature type="binding site" evidence="1">
    <location>
        <position position="109"/>
    </location>
    <ligand>
        <name>Zn(2+)</name>
        <dbReference type="ChEBI" id="CHEBI:29105"/>
    </ligand>
</feature>
<feature type="binding site" evidence="1">
    <location>
        <position position="114"/>
    </location>
    <ligand>
        <name>Zn(2+)</name>
        <dbReference type="ChEBI" id="CHEBI:29105"/>
    </ligand>
</feature>
<feature type="binding site" evidence="1">
    <location>
        <position position="138"/>
    </location>
    <ligand>
        <name>Zn(2+)</name>
        <dbReference type="ChEBI" id="CHEBI:29105"/>
    </ligand>
</feature>
<feature type="binding site" evidence="1">
    <location>
        <position position="141"/>
    </location>
    <ligand>
        <name>Zn(2+)</name>
        <dbReference type="ChEBI" id="CHEBI:29105"/>
    </ligand>
</feature>
<accession>A0B8L2</accession>
<gene>
    <name evidence="1" type="primary">pyrI</name>
    <name type="ordered locus">Mthe_1257</name>
</gene>
<sequence length="154" mass="16996">MVERELKVRPIRSGTVIDHIQAGQALNVLKILGISGTTGATVSVLMNVSSRKLGKKDIVKVEDRELREDEVNKIALIAPGATINIVRDYAVVEKYAVDLPDVIVGVVRCQNPSCISNTNEPIKPKMLVKGKNPVVLRCFYCDQPLTERIAEYLL</sequence>
<dbReference type="EMBL" id="CP000477">
    <property type="protein sequence ID" value="ABK15036.1"/>
    <property type="molecule type" value="Genomic_DNA"/>
</dbReference>
<dbReference type="RefSeq" id="WP_011696428.1">
    <property type="nucleotide sequence ID" value="NC_008553.1"/>
</dbReference>
<dbReference type="SMR" id="A0B8L2"/>
<dbReference type="STRING" id="349307.Mthe_1257"/>
<dbReference type="GeneID" id="4462543"/>
<dbReference type="KEGG" id="mtp:Mthe_1257"/>
<dbReference type="HOGENOM" id="CLU_128576_0_0_2"/>
<dbReference type="OrthoDB" id="7000at2157"/>
<dbReference type="Proteomes" id="UP000000674">
    <property type="component" value="Chromosome"/>
</dbReference>
<dbReference type="GO" id="GO:0009347">
    <property type="term" value="C:aspartate carbamoyltransferase complex"/>
    <property type="evidence" value="ECO:0007669"/>
    <property type="project" value="InterPro"/>
</dbReference>
<dbReference type="GO" id="GO:0046872">
    <property type="term" value="F:metal ion binding"/>
    <property type="evidence" value="ECO:0007669"/>
    <property type="project" value="UniProtKB-KW"/>
</dbReference>
<dbReference type="GO" id="GO:0006207">
    <property type="term" value="P:'de novo' pyrimidine nucleobase biosynthetic process"/>
    <property type="evidence" value="ECO:0007669"/>
    <property type="project" value="InterPro"/>
</dbReference>
<dbReference type="GO" id="GO:0006221">
    <property type="term" value="P:pyrimidine nucleotide biosynthetic process"/>
    <property type="evidence" value="ECO:0007669"/>
    <property type="project" value="UniProtKB-UniRule"/>
</dbReference>
<dbReference type="Gene3D" id="2.30.30.20">
    <property type="entry name" value="Aspartate carbamoyltransferase regulatory subunit, C-terminal domain"/>
    <property type="match status" value="1"/>
</dbReference>
<dbReference type="Gene3D" id="3.30.70.140">
    <property type="entry name" value="Aspartate carbamoyltransferase regulatory subunit, N-terminal domain"/>
    <property type="match status" value="1"/>
</dbReference>
<dbReference type="HAMAP" id="MF_00002">
    <property type="entry name" value="Asp_carb_tr_reg"/>
    <property type="match status" value="1"/>
</dbReference>
<dbReference type="InterPro" id="IPR020545">
    <property type="entry name" value="Asp_carbamoyltransf_reg_N"/>
</dbReference>
<dbReference type="InterPro" id="IPR002801">
    <property type="entry name" value="Asp_carbamoylTrfase_reg"/>
</dbReference>
<dbReference type="InterPro" id="IPR020542">
    <property type="entry name" value="Asp_carbamoyltrfase_reg_C"/>
</dbReference>
<dbReference type="InterPro" id="IPR036792">
    <property type="entry name" value="Asp_carbatrfase_reg_C_sf"/>
</dbReference>
<dbReference type="InterPro" id="IPR036793">
    <property type="entry name" value="Asp_carbatrfase_reg_N_sf"/>
</dbReference>
<dbReference type="NCBIfam" id="TIGR00240">
    <property type="entry name" value="ATCase_reg"/>
    <property type="match status" value="1"/>
</dbReference>
<dbReference type="PANTHER" id="PTHR35805">
    <property type="entry name" value="ASPARTATE CARBAMOYLTRANSFERASE REGULATORY CHAIN"/>
    <property type="match status" value="1"/>
</dbReference>
<dbReference type="PANTHER" id="PTHR35805:SF1">
    <property type="entry name" value="ASPARTATE CARBAMOYLTRANSFERASE REGULATORY CHAIN"/>
    <property type="match status" value="1"/>
</dbReference>
<dbReference type="Pfam" id="PF01948">
    <property type="entry name" value="PyrI"/>
    <property type="match status" value="1"/>
</dbReference>
<dbReference type="Pfam" id="PF02748">
    <property type="entry name" value="PyrI_C"/>
    <property type="match status" value="1"/>
</dbReference>
<dbReference type="SUPFAM" id="SSF57825">
    <property type="entry name" value="Aspartate carbamoyltransferase, Regulatory-chain, C-terminal domain"/>
    <property type="match status" value="1"/>
</dbReference>
<dbReference type="SUPFAM" id="SSF54893">
    <property type="entry name" value="Aspartate carbamoyltransferase, Regulatory-chain, N-terminal domain"/>
    <property type="match status" value="1"/>
</dbReference>
<protein>
    <recommendedName>
        <fullName evidence="1">Aspartate carbamoyltransferase regulatory chain</fullName>
    </recommendedName>
</protein>
<proteinExistence type="inferred from homology"/>